<dbReference type="PIR" id="A41308">
    <property type="entry name" value="ASLJNA"/>
</dbReference>
<dbReference type="SMR" id="P31820"/>
<dbReference type="GO" id="GO:0030430">
    <property type="term" value="C:host cell cytoplasm"/>
    <property type="evidence" value="ECO:0007669"/>
    <property type="project" value="UniProtKB-SubCell"/>
</dbReference>
<dbReference type="GO" id="GO:0020002">
    <property type="term" value="C:host cell plasma membrane"/>
    <property type="evidence" value="ECO:0007669"/>
    <property type="project" value="UniProtKB-SubCell"/>
</dbReference>
<dbReference type="GO" id="GO:0016020">
    <property type="term" value="C:membrane"/>
    <property type="evidence" value="ECO:0007669"/>
    <property type="project" value="UniProtKB-UniRule"/>
</dbReference>
<dbReference type="GO" id="GO:0044423">
    <property type="term" value="C:virion component"/>
    <property type="evidence" value="ECO:0007669"/>
    <property type="project" value="UniProtKB-UniRule"/>
</dbReference>
<dbReference type="GO" id="GO:0046872">
    <property type="term" value="F:metal ion binding"/>
    <property type="evidence" value="ECO:0007669"/>
    <property type="project" value="UniProtKB-KW"/>
</dbReference>
<dbReference type="GO" id="GO:0003723">
    <property type="term" value="F:RNA binding"/>
    <property type="evidence" value="ECO:0007669"/>
    <property type="project" value="UniProtKB-UniRule"/>
</dbReference>
<dbReference type="GO" id="GO:0019058">
    <property type="term" value="P:viral life cycle"/>
    <property type="evidence" value="ECO:0007669"/>
    <property type="project" value="InterPro"/>
</dbReference>
<dbReference type="HAMAP" id="MF_04081">
    <property type="entry name" value="HIV_VIF"/>
    <property type="match status" value="1"/>
</dbReference>
<dbReference type="InterPro" id="IPR000475">
    <property type="entry name" value="Vif"/>
</dbReference>
<dbReference type="Pfam" id="PF00559">
    <property type="entry name" value="Vif"/>
    <property type="match status" value="1"/>
</dbReference>
<dbReference type="PRINTS" id="PR00349">
    <property type="entry name" value="VIRIONINFFCT"/>
</dbReference>
<keyword id="KW-0014">AIDS</keyword>
<keyword id="KW-1032">Host cell membrane</keyword>
<keyword id="KW-1035">Host cytoplasm</keyword>
<keyword id="KW-1043">Host membrane</keyword>
<keyword id="KW-0945">Host-virus interaction</keyword>
<keyword id="KW-0472">Membrane</keyword>
<keyword id="KW-0479">Metal-binding</keyword>
<keyword id="KW-0597">Phosphoprotein</keyword>
<keyword id="KW-0694">RNA-binding</keyword>
<keyword id="KW-0832">Ubl conjugation</keyword>
<keyword id="KW-0833">Ubl conjugation pathway</keyword>
<keyword id="KW-0946">Virion</keyword>
<keyword id="KW-0862">Zinc</keyword>
<organismHost>
    <name type="scientific">Homo sapiens</name>
    <name type="common">Human</name>
    <dbReference type="NCBI Taxonomy" id="9606"/>
</organismHost>
<sequence length="192" mass="22611">MENRWQVMIVWQVDRMRIRTWKSLVKHHMYVSGKARGWFYRHHYESPHPRISSEVHIPLGDARLVITTYWGLHTGERDWHLGQGVSIKWRKKRYSTQVDPELADQLIHLYYFDCFSDSAIRKALLGHIVSPRCEYQAGHNKVGSLQYLALAALITPKKIKPPLPSVTKLTEDRWNKPQKTKGHRRSHTMNGH</sequence>
<protein>
    <recommendedName>
        <fullName evidence="2">Virion infectivity factor</fullName>
        <shortName evidence="2">Vif</shortName>
    </recommendedName>
    <alternativeName>
        <fullName evidence="2">SOR protein</fullName>
    </alternativeName>
    <component>
        <recommendedName>
            <fullName evidence="2">p17</fullName>
        </recommendedName>
    </component>
    <component>
        <recommendedName>
            <fullName evidence="2">p7</fullName>
        </recommendedName>
    </component>
</protein>
<organism>
    <name type="scientific">Human immunodeficiency virus type 1 group M subtype B (isolate N1T-A)</name>
    <name type="common">HIV-1</name>
    <dbReference type="NCBI Taxonomy" id="36376"/>
    <lineage>
        <taxon>Viruses</taxon>
        <taxon>Riboviria</taxon>
        <taxon>Pararnavirae</taxon>
        <taxon>Artverviricota</taxon>
        <taxon>Revtraviricetes</taxon>
        <taxon>Ortervirales</taxon>
        <taxon>Retroviridae</taxon>
        <taxon>Orthoretrovirinae</taxon>
        <taxon>Lentivirus</taxon>
        <taxon>Human immunodeficiency virus type 1</taxon>
    </lineage>
</organism>
<evidence type="ECO:0000250" key="1">
    <source>
        <dbReference type="UniProtKB" id="O70897"/>
    </source>
</evidence>
<evidence type="ECO:0000255" key="2">
    <source>
        <dbReference type="HAMAP-Rule" id="MF_04081"/>
    </source>
</evidence>
<evidence type="ECO:0000256" key="3">
    <source>
        <dbReference type="SAM" id="MobiDB-lite"/>
    </source>
</evidence>
<evidence type="ECO:0000269" key="4">
    <source>
    </source>
</evidence>
<proteinExistence type="evidence at protein level"/>
<accession>P31820</accession>
<comment type="function">
    <text evidence="2">Counteracts the innate antiviral activity of host APOBEC3F and APOBEC3G by promoting their ubiquitination and degradation. Acts as a substrate recognition component of an E3 ubiquitin-protein ligase complex: mechanistically, Vif hijacks a host cullin-5-RING E3 ubiquitin-protein ligase complex (ECS complex) and the transcription coactivator CBFB/CBF-beta to form an active E3 ubiquitin-protein ligase complex that targets APOBEC3G and APOBEC3F for polyubiquitination, leading to their degradation by the proteasome. Vif interaction with APOBEC3G also blocks its cytidine deaminase activity in a proteasome-independent manner, suggesting a dual inhibitory mechanism. May interact directly with APOBEC3G mRNA in order to inhibit its translation. Association with CBFB/CBF-beta also inhibits the transcription coactivator activity of CBFB/CBF-beta. Seems to play a role in viral morphology by affecting the stability of the viral nucleoprotein core. Finally, Vif also contributes to the G2 cell cycle arrest observed in HIV infected cells.</text>
</comment>
<comment type="subunit">
    <text evidence="1">Homomultimer; in vitro and presumably in vivo. Interacts with viral RNA and Pr55Gag precursor; these interactions mediate Vif incorporation into the virion. Interacts with the viral reverse transcriptase. Forms cullin-5-RING E3 ubiquitin-protein ligase complex (ECS complex) by interacting with host CUL5, RBX2, elongin BC complex (ELOB and ELOC) and CBFB/CBF-beta. Within the ECS complex, Vif interacts directly with host CUL5, ELOC and APOBEC (APOBEC3F and APOBEC3G) substrates. The ECS complex also contains some single-stranded RNA (ssRNA) that acts as a glue that bridges Vif with APOBEC (APOBEC3F and APOBEC3G) substrates. Interacts with host UBCE7IP1 isoform 3/ZIN and possibly with SAT. Interacts with host tyrosine kinases HCK and FYN; these interactions may decrease level of phosphorylated APOBEC3G incorporation into virions. Interacts with host ABCE1; this interaction may play a role in protecting viral RNA from damage during viral assembly. Interacts with host MDM2; this interaction targets Vif for degradation by the proteasome.</text>
</comment>
<comment type="subcellular location">
    <subcellularLocation>
        <location evidence="2">Host cytoplasm</location>
    </subcellularLocation>
    <subcellularLocation>
        <location evidence="2">Host cell membrane</location>
        <topology evidence="2">Peripheral membrane protein</topology>
        <orientation evidence="2">Cytoplasmic side</orientation>
    </subcellularLocation>
    <subcellularLocation>
        <location evidence="2">Virion</location>
    </subcellularLocation>
    <text evidence="2">In the cytoplasm, seems to colocalize with intermediate filament vimentin. A fraction is associated with the cytoplasmic side of cellular membranes, presumably via the interaction with Pr55Gag precursor. Incorporated in virions at a ratio of approximately 7 to 20 molecules per virion.</text>
</comment>
<comment type="induction">
    <text evidence="2">Expressed late during infection in a Rev-dependent manner.</text>
</comment>
<comment type="domain">
    <text evidence="2">The BC-like-box motif mediates the interaction with elongin BC complex.</text>
</comment>
<comment type="domain">
    <text evidence="2">The HCCH motif (H-x(5)-C-x(18)-C-x(5)-H) mediates the interaction with CUL5.</text>
</comment>
<comment type="PTM">
    <text evidence="2">Processed in virion by the viral protease.</text>
</comment>
<comment type="PTM">
    <text evidence="2">Highly phosphorylated on serine and threonine residues.</text>
</comment>
<comment type="PTM">
    <text evidence="2">Polyubiquitinated and degraded by the proteasome in the presence of APOBEC3G.</text>
</comment>
<comment type="miscellaneous">
    <text evidence="2">Vif-defective viruses show catastrophic failure in reverse transcription due to APOBEC-induced mutations that initiate a DNA base repair pathway and compromise the structural integrity of the ssDNA. In the absence of Vif, the virion is morphologically abnormal.</text>
</comment>
<comment type="miscellaneous">
    <text evidence="2">HIV-1 lineages are divided in three main groups, M (for Major), O (for Outlier), and N (for New, or Non-M, Non-O). The vast majority of strains found worldwide belong to the group M. Group O seems to be endemic to and largely confined to Cameroon and neighboring countries in West Central Africa, where these viruses represent a small minority of HIV-1 strains. The group N is represented by a limited number of isolates from Cameroonian persons. The group M is further subdivided in 9 clades or subtypes (A to D, F to H, J and K).</text>
</comment>
<comment type="miscellaneous">
    <text evidence="2">Required for replication in 'nonpermissive' cells, including primary T-cells, macrophages and certain T-cell lines, but is dispensable for replication in 'permissive' cell lines, such as 293T cells. In nonpermissive cells, Vif-defective viruses can produce virions, but they fail to complete reverse transcription and cannot successfully infect new cells.</text>
</comment>
<comment type="similarity">
    <text evidence="2">Belongs to the primate lentivirus group Vif protein family.</text>
</comment>
<reference key="1">
    <citation type="journal article" date="1991" name="J. Virol.">
        <title>Recombinational analysis of a natural noncytopathic human immunodeficiency virus type 1 (HIV-1) isolate: role of the vif gene in HIV-1 infection kinetics and cytopathicity.</title>
        <authorList>
            <person name="Sakai K."/>
            <person name="Ma X."/>
            <person name="Gordienko I."/>
            <person name="Volsky D.J."/>
        </authorList>
    </citation>
    <scope>NUCLEOTIDE SEQUENCE [GENOMIC DNA]</scope>
</reference>
<reference key="2">
    <citation type="journal article" date="1994" name="J. Virol.">
        <title>Cysteine residues in the Vif protein of human immunodeficiency virus type 1 are essential for viral infectivity.</title>
        <authorList>
            <person name="Ma X.Y."/>
            <person name="Sova P."/>
            <person name="Chao W."/>
            <person name="Volsky D.J."/>
        </authorList>
    </citation>
    <scope>MUTAGENESIS OF CYS-114 AND CYS-133</scope>
</reference>
<reference key="3">
    <citation type="journal article" date="2004" name="Trends Mol. Med.">
        <title>The viral infectivity factor (Vif) of HIV-1 unveiled.</title>
        <authorList>
            <person name="Rose K.M."/>
            <person name="Marin M."/>
            <person name="Kozak S.L."/>
            <person name="Kabat D."/>
        </authorList>
    </citation>
    <scope>REVIEW</scope>
</reference>
<feature type="chain" id="PRO_0000043032" description="Virion infectivity factor" evidence="2">
    <location>
        <begin position="1"/>
        <end position="192"/>
    </location>
</feature>
<feature type="chain" id="PRO_0000043033" description="p17" evidence="2">
    <location>
        <begin position="1"/>
        <end position="150"/>
    </location>
</feature>
<feature type="chain" id="PRO_0000043034" description="p7" evidence="2">
    <location>
        <begin position="151"/>
        <end position="192"/>
    </location>
</feature>
<feature type="region of interest" description="Interaction with host APOBEC3F; F1-box" evidence="2">
    <location>
        <begin position="14"/>
        <end position="17"/>
    </location>
</feature>
<feature type="region of interest" description="Interaction with host APOBEC3G; G-box" evidence="2">
    <location>
        <begin position="40"/>
        <end position="44"/>
    </location>
</feature>
<feature type="region of interest" description="Interaction with host APOBEC3F and APOBEC3G; FG-box" evidence="2">
    <location>
        <begin position="54"/>
        <end position="72"/>
    </location>
</feature>
<feature type="region of interest" description="Interaction with host APOBEC3F; F2-box" evidence="2">
    <location>
        <begin position="74"/>
        <end position="79"/>
    </location>
</feature>
<feature type="region of interest" description="RNA-binding" evidence="2">
    <location>
        <begin position="75"/>
        <end position="114"/>
    </location>
</feature>
<feature type="region of interest" description="SOCS box-like" evidence="2">
    <location>
        <begin position="151"/>
        <end position="180"/>
    </location>
</feature>
<feature type="region of interest" description="Multimerization" evidence="2">
    <location>
        <begin position="151"/>
        <end position="164"/>
    </location>
</feature>
<feature type="region of interest" description="Disordered" evidence="3">
    <location>
        <begin position="164"/>
        <end position="192"/>
    </location>
</feature>
<feature type="region of interest" description="Membrane association" evidence="2">
    <location>
        <begin position="171"/>
        <end position="172"/>
    </location>
</feature>
<feature type="short sequence motif" description="HCCH motif" evidence="2">
    <location>
        <begin position="108"/>
        <end position="139"/>
    </location>
</feature>
<feature type="short sequence motif" description="BC-box-like motif" evidence="2">
    <location>
        <begin position="144"/>
        <end position="153"/>
    </location>
</feature>
<feature type="compositionally biased region" description="Basic residues" evidence="3">
    <location>
        <begin position="176"/>
        <end position="192"/>
    </location>
</feature>
<feature type="binding site" evidence="2">
    <location>
        <position position="108"/>
    </location>
    <ligand>
        <name>Zn(2+)</name>
        <dbReference type="ChEBI" id="CHEBI:29105"/>
    </ligand>
</feature>
<feature type="binding site" evidence="2">
    <location>
        <position position="114"/>
    </location>
    <ligand>
        <name>Zn(2+)</name>
        <dbReference type="ChEBI" id="CHEBI:29105"/>
    </ligand>
</feature>
<feature type="binding site" evidence="2">
    <location>
        <position position="133"/>
    </location>
    <ligand>
        <name>Zn(2+)</name>
        <dbReference type="ChEBI" id="CHEBI:29105"/>
    </ligand>
</feature>
<feature type="binding site" evidence="2">
    <location>
        <position position="139"/>
    </location>
    <ligand>
        <name>Zn(2+)</name>
        <dbReference type="ChEBI" id="CHEBI:29105"/>
    </ligand>
</feature>
<feature type="site" description="Cleavage in virion (by viral protease)" evidence="2">
    <location>
        <begin position="150"/>
        <end position="151"/>
    </location>
</feature>
<feature type="modified residue" description="Phosphothreonine; by host MAP4K1" evidence="2">
    <location>
        <position position="96"/>
    </location>
</feature>
<feature type="modified residue" description="Phosphoserine; by host" evidence="2">
    <location>
        <position position="144"/>
    </location>
</feature>
<feature type="modified residue" description="Phosphothreonine; by host" evidence="2">
    <location>
        <position position="155"/>
    </location>
</feature>
<feature type="modified residue" description="Phosphoserine; by host MAP4K1" evidence="2">
    <location>
        <position position="165"/>
    </location>
</feature>
<feature type="modified residue" description="Phosphothreonine; by host" evidence="2">
    <location>
        <position position="188"/>
    </location>
</feature>
<feature type="mutagenesis site" description="Complete loss of viral infectivity in non-permissive cells." evidence="4">
    <original>C</original>
    <variation>L</variation>
    <location>
        <position position="114"/>
    </location>
</feature>
<feature type="mutagenesis site" description="Complete loss of viral infectivity in non-permissive cells." evidence="4">
    <original>C</original>
    <variation>L</variation>
    <location>
        <position position="133"/>
    </location>
</feature>
<gene>
    <name evidence="2" type="primary">vif</name>
</gene>
<name>VIF_HV1NA</name>